<reference key="1">
    <citation type="journal article" date="2001" name="Toxicon">
        <title>Precursor nucleotide sequence and genomic organization of BmTXKS1, a new scorpion toxin-like peptide from Buthus martensii Karsch.</title>
        <authorList>
            <person name="Zhu S.-Y."/>
            <person name="Li W.-X."/>
            <person name="Zeng X.-C."/>
        </authorList>
    </citation>
    <scope>NUCLEOTIDE SEQUENCE [GENOMIC DNA / MRNA]</scope>
    <scope>AMIDATION AT LYS-59</scope>
    <source>
        <tissue>Venom gland</tissue>
    </source>
</reference>
<comment type="function">
    <text evidence="1">Inhibits potassium channels.</text>
</comment>
<comment type="subcellular location">
    <subcellularLocation>
        <location>Secreted</location>
    </subcellularLocation>
</comment>
<comment type="tissue specificity">
    <text>Expressed by the venom gland.</text>
</comment>
<protein>
    <recommendedName>
        <fullName>Putative potassium channel blocker TXKS1</fullName>
    </recommendedName>
    <alternativeName>
        <fullName>BmTXKS1</fullName>
    </alternativeName>
</protein>
<sequence length="60" mass="6523">MNRLTTIILMLIVINVIMDDISESKVAAGIVCKVCKIICGMQGKKVNICKAPIKCKCKKG</sequence>
<dbReference type="EMBL" id="AF155369">
    <property type="protein sequence ID" value="AAK61819.1"/>
    <property type="molecule type" value="mRNA"/>
</dbReference>
<dbReference type="EMBL" id="AF380940">
    <property type="protein sequence ID" value="AAK58091.1"/>
    <property type="molecule type" value="Genomic_DNA"/>
</dbReference>
<dbReference type="SMR" id="Q95P89"/>
<dbReference type="GO" id="GO:0005576">
    <property type="term" value="C:extracellular region"/>
    <property type="evidence" value="ECO:0007669"/>
    <property type="project" value="UniProtKB-SubCell"/>
</dbReference>
<dbReference type="GO" id="GO:0008200">
    <property type="term" value="F:ion channel inhibitor activity"/>
    <property type="evidence" value="ECO:0007669"/>
    <property type="project" value="InterPro"/>
</dbReference>
<dbReference type="GO" id="GO:0015459">
    <property type="term" value="F:potassium channel regulator activity"/>
    <property type="evidence" value="ECO:0007669"/>
    <property type="project" value="UniProtKB-KW"/>
</dbReference>
<dbReference type="GO" id="GO:0090729">
    <property type="term" value="F:toxin activity"/>
    <property type="evidence" value="ECO:0007669"/>
    <property type="project" value="UniProtKB-KW"/>
</dbReference>
<dbReference type="InterPro" id="IPR008911">
    <property type="entry name" value="Toxin_alpha-KTx_8/9"/>
</dbReference>
<dbReference type="Pfam" id="PF05453">
    <property type="entry name" value="Toxin_6"/>
    <property type="match status" value="1"/>
</dbReference>
<organism>
    <name type="scientific">Olivierus martensii</name>
    <name type="common">Manchurian scorpion</name>
    <name type="synonym">Mesobuthus martensii</name>
    <dbReference type="NCBI Taxonomy" id="34649"/>
    <lineage>
        <taxon>Eukaryota</taxon>
        <taxon>Metazoa</taxon>
        <taxon>Ecdysozoa</taxon>
        <taxon>Arthropoda</taxon>
        <taxon>Chelicerata</taxon>
        <taxon>Arachnida</taxon>
        <taxon>Scorpiones</taxon>
        <taxon>Buthida</taxon>
        <taxon>Buthoidea</taxon>
        <taxon>Buthidae</taxon>
        <taxon>Olivierus</taxon>
    </lineage>
</organism>
<proteinExistence type="evidence at protein level"/>
<keyword id="KW-0027">Amidation</keyword>
<keyword id="KW-1015">Disulfide bond</keyword>
<keyword id="KW-0872">Ion channel impairing toxin</keyword>
<keyword id="KW-0528">Neurotoxin</keyword>
<keyword id="KW-0632">Potassium channel impairing toxin</keyword>
<keyword id="KW-0964">Secreted</keyword>
<keyword id="KW-0732">Signal</keyword>
<keyword id="KW-0800">Toxin</keyword>
<name>SCS1_OLIMR</name>
<feature type="signal peptide" evidence="1">
    <location>
        <begin position="1"/>
        <end position="28"/>
    </location>
</feature>
<feature type="chain" id="PRO_0000035364" description="Putative potassium channel blocker TXKS1">
    <location>
        <begin position="29"/>
        <end position="59"/>
    </location>
</feature>
<feature type="modified residue" description="Lysine amide" evidence="3">
    <location>
        <position position="59"/>
    </location>
</feature>
<feature type="disulfide bond" evidence="1">
    <location>
        <begin position="32"/>
        <end position="49"/>
    </location>
</feature>
<feature type="disulfide bond" evidence="1">
    <location>
        <begin position="35"/>
        <end position="55"/>
    </location>
</feature>
<feature type="disulfide bond" evidence="1">
    <location>
        <begin position="39"/>
        <end position="57"/>
    </location>
</feature>
<feature type="sequence conflict" description="In Ref. 1; AAK58091." evidence="2" ref="1">
    <original>KKV</original>
    <variation>VKK</variation>
    <location>
        <begin position="44"/>
        <end position="46"/>
    </location>
</feature>
<accession>Q95P89</accession>
<accession>Q963F8</accession>
<evidence type="ECO:0000250" key="1"/>
<evidence type="ECO:0000305" key="2"/>
<evidence type="ECO:0000305" key="3">
    <source>
    </source>
</evidence>